<proteinExistence type="inferred from homology"/>
<reference key="1">
    <citation type="journal article" date="2009" name="PLoS ONE">
        <title>Salmonella paratyphi C: genetic divergence from Salmonella choleraesuis and pathogenic convergence with Salmonella typhi.</title>
        <authorList>
            <person name="Liu W.-Q."/>
            <person name="Feng Y."/>
            <person name="Wang Y."/>
            <person name="Zou Q.-H."/>
            <person name="Chen F."/>
            <person name="Guo J.-T."/>
            <person name="Peng Y.-H."/>
            <person name="Jin Y."/>
            <person name="Li Y.-G."/>
            <person name="Hu S.-N."/>
            <person name="Johnston R.N."/>
            <person name="Liu G.-R."/>
            <person name="Liu S.-L."/>
        </authorList>
    </citation>
    <scope>NUCLEOTIDE SEQUENCE [LARGE SCALE GENOMIC DNA]</scope>
    <source>
        <strain>RKS4594</strain>
    </source>
</reference>
<keyword id="KW-0963">Cytoplasm</keyword>
<keyword id="KW-0808">Transferase</keyword>
<keyword id="KW-0819">tRNA processing</keyword>
<gene>
    <name evidence="1" type="primary">tusD</name>
    <name type="ordered locus">SPC_3520</name>
</gene>
<evidence type="ECO:0000255" key="1">
    <source>
        <dbReference type="HAMAP-Rule" id="MF_00390"/>
    </source>
</evidence>
<name>TUSD_SALPC</name>
<sequence>MRYAIMVTGPAYGTQQASSALQFAHALLNEGHELASVFFYREGVYNANLLTSPASDEYDLVRAWQKLNTQHGVALNICVAAALRRGIIDETEAGRLALPSANLQPGFTLSGLGALAEASLTCDRVVQF</sequence>
<feature type="chain" id="PRO_1000134417" description="Sulfurtransferase TusD">
    <location>
        <begin position="1"/>
        <end position="128"/>
    </location>
</feature>
<feature type="active site" description="Cysteine persulfide intermediate" evidence="1">
    <location>
        <position position="78"/>
    </location>
</feature>
<dbReference type="EC" id="2.8.1.-" evidence="1"/>
<dbReference type="EMBL" id="CP000857">
    <property type="protein sequence ID" value="ACN47604.1"/>
    <property type="molecule type" value="Genomic_DNA"/>
</dbReference>
<dbReference type="RefSeq" id="WP_001268010.1">
    <property type="nucleotide sequence ID" value="NC_012125.1"/>
</dbReference>
<dbReference type="SMR" id="C0Q0C7"/>
<dbReference type="KEGG" id="sei:SPC_3520"/>
<dbReference type="HOGENOM" id="CLU_132095_0_0_6"/>
<dbReference type="Proteomes" id="UP000001599">
    <property type="component" value="Chromosome"/>
</dbReference>
<dbReference type="GO" id="GO:1990228">
    <property type="term" value="C:sulfurtransferase complex"/>
    <property type="evidence" value="ECO:0007669"/>
    <property type="project" value="TreeGrafter"/>
</dbReference>
<dbReference type="GO" id="GO:0097163">
    <property type="term" value="F:sulfur carrier activity"/>
    <property type="evidence" value="ECO:0007669"/>
    <property type="project" value="TreeGrafter"/>
</dbReference>
<dbReference type="GO" id="GO:0016783">
    <property type="term" value="F:sulfurtransferase activity"/>
    <property type="evidence" value="ECO:0007669"/>
    <property type="project" value="UniProtKB-UniRule"/>
</dbReference>
<dbReference type="GO" id="GO:0002143">
    <property type="term" value="P:tRNA wobble position uridine thiolation"/>
    <property type="evidence" value="ECO:0007669"/>
    <property type="project" value="TreeGrafter"/>
</dbReference>
<dbReference type="FunFam" id="3.40.1260.10:FF:000001">
    <property type="entry name" value="Sulfurtransferase TusD"/>
    <property type="match status" value="1"/>
</dbReference>
<dbReference type="Gene3D" id="3.40.1260.10">
    <property type="entry name" value="DsrEFH-like"/>
    <property type="match status" value="1"/>
</dbReference>
<dbReference type="HAMAP" id="MF_00390">
    <property type="entry name" value="Thiourid_synth_D"/>
    <property type="match status" value="1"/>
</dbReference>
<dbReference type="InterPro" id="IPR027396">
    <property type="entry name" value="DsrEFH-like"/>
</dbReference>
<dbReference type="InterPro" id="IPR003787">
    <property type="entry name" value="Sulphur_relay_DsrE/F-like"/>
</dbReference>
<dbReference type="InterPro" id="IPR017463">
    <property type="entry name" value="Sulphur_relay_TusD/DsrE"/>
</dbReference>
<dbReference type="NCBIfam" id="NF001237">
    <property type="entry name" value="PRK00207.1"/>
    <property type="match status" value="1"/>
</dbReference>
<dbReference type="NCBIfam" id="TIGR03012">
    <property type="entry name" value="sulf_tusD_dsrE"/>
    <property type="match status" value="1"/>
</dbReference>
<dbReference type="PANTHER" id="PTHR34874">
    <property type="entry name" value="PROTEIN YCHN"/>
    <property type="match status" value="1"/>
</dbReference>
<dbReference type="PANTHER" id="PTHR34874:SF3">
    <property type="entry name" value="SULFURTRANSFERASE TUSD"/>
    <property type="match status" value="1"/>
</dbReference>
<dbReference type="Pfam" id="PF02635">
    <property type="entry name" value="DsrE"/>
    <property type="match status" value="1"/>
</dbReference>
<dbReference type="SUPFAM" id="SSF75169">
    <property type="entry name" value="DsrEFH-like"/>
    <property type="match status" value="1"/>
</dbReference>
<accession>C0Q0C7</accession>
<protein>
    <recommendedName>
        <fullName evidence="1">Sulfurtransferase TusD</fullName>
        <ecNumber evidence="1">2.8.1.-</ecNumber>
    </recommendedName>
    <alternativeName>
        <fullName evidence="1">tRNA 2-thiouridine synthesizing protein D</fullName>
    </alternativeName>
</protein>
<comment type="function">
    <text evidence="1">Part of a sulfur-relay system required for 2-thiolation of 5-methylaminomethyl-2-thiouridine (mnm(5)s(2)U) at tRNA wobble positions. Accepts sulfur from TusA and transfers it in turn to TusE.</text>
</comment>
<comment type="subunit">
    <text evidence="1">Heterohexamer, formed by a dimer of trimers. The hexameric TusBCD complex contains 2 copies each of TusB, TusC and TusD. The TusBCD complex interacts with TusE.</text>
</comment>
<comment type="subcellular location">
    <subcellularLocation>
        <location evidence="1">Cytoplasm</location>
    </subcellularLocation>
</comment>
<comment type="similarity">
    <text evidence="1">Belongs to the DsrE/TusD family.</text>
</comment>
<organism>
    <name type="scientific">Salmonella paratyphi C (strain RKS4594)</name>
    <dbReference type="NCBI Taxonomy" id="476213"/>
    <lineage>
        <taxon>Bacteria</taxon>
        <taxon>Pseudomonadati</taxon>
        <taxon>Pseudomonadota</taxon>
        <taxon>Gammaproteobacteria</taxon>
        <taxon>Enterobacterales</taxon>
        <taxon>Enterobacteriaceae</taxon>
        <taxon>Salmonella</taxon>
    </lineage>
</organism>